<evidence type="ECO:0000250" key="1"/>
<evidence type="ECO:0000255" key="2"/>
<evidence type="ECO:0000255" key="3">
    <source>
        <dbReference type="PROSITE-ProRule" id="PRU00040"/>
    </source>
</evidence>
<evidence type="ECO:0000269" key="4">
    <source>
    </source>
</evidence>
<evidence type="ECO:0000305" key="5"/>
<organism>
    <name type="scientific">Micrurus corallinus</name>
    <name type="common">Brazilian coral snake</name>
    <dbReference type="NCBI Taxonomy" id="54390"/>
    <lineage>
        <taxon>Eukaryota</taxon>
        <taxon>Metazoa</taxon>
        <taxon>Chordata</taxon>
        <taxon>Craniata</taxon>
        <taxon>Vertebrata</taxon>
        <taxon>Euteleostomi</taxon>
        <taxon>Lepidosauria</taxon>
        <taxon>Squamata</taxon>
        <taxon>Bifurcata</taxon>
        <taxon>Unidentata</taxon>
        <taxon>Episquamata</taxon>
        <taxon>Toxicofera</taxon>
        <taxon>Serpentes</taxon>
        <taxon>Colubroidea</taxon>
        <taxon>Elapidae</taxon>
        <taxon>Elapinae</taxon>
        <taxon>Micrurus</taxon>
    </lineage>
</organism>
<name>LEC1_MICCO</name>
<reference key="1">
    <citation type="journal article" date="2009" name="BMC Genomics">
        <title>Transcriptomic basis for an antiserum against Micrurus corallinus (coral snake) venom.</title>
        <authorList>
            <person name="Leao L.I."/>
            <person name="Ho P.L."/>
            <person name="Junqueira-de-Azevedo I.L.M."/>
        </authorList>
    </citation>
    <scope>NUCLEOTIDE SEQUENCE [MRNA]</scope>
    <source>
        <tissue>Venom gland</tissue>
    </source>
</reference>
<reference key="2">
    <citation type="journal article" date="2011" name="J. Proteomics">
        <title>Snake venomics and venom gland transcriptomic analysis of Brazilian coral snakes, Micrurus altirostris and M. corallinus.</title>
        <authorList>
            <person name="Correa-Netto C."/>
            <person name="Junqueira-de-Azevedo Ide L."/>
            <person name="Silva D.A."/>
            <person name="Ho P.L."/>
            <person name="Leitao-de-Araujo M."/>
            <person name="Alves M.L."/>
            <person name="Sanz L."/>
            <person name="Foguel D."/>
            <person name="Zingali R.B."/>
            <person name="Calvete J.J."/>
        </authorList>
    </citation>
    <scope>PROTEIN SEQUENCE OF 24-38</scope>
    <scope>IDENTIFICATION BY MASS SPECTROMETRY</scope>
    <source>
        <tissue>Venom</tissue>
    </source>
</reference>
<sequence length="158" mass="18521">MGHFTFISLCLMPIFLSLSGAECYTCPIDWLSRNGLCYKLFDDTKTWPDAEIFCRKHKPGCHLTSIHSEAESADLAEYIYDYLKSEKNVWIGLNDPQKERIWEWTDRSSTNYTSWNEGEPNNSWNKEYCVHLLASQGYLKWNDTPCESLFAFICRCQF</sequence>
<accession>C6JUN9</accession>
<keyword id="KW-0106">Calcium</keyword>
<keyword id="KW-0903">Direct protein sequencing</keyword>
<keyword id="KW-1015">Disulfide bond</keyword>
<keyword id="KW-0325">Glycoprotein</keyword>
<keyword id="KW-0430">Lectin</keyword>
<keyword id="KW-0479">Metal-binding</keyword>
<keyword id="KW-0964">Secreted</keyword>
<keyword id="KW-0732">Signal</keyword>
<protein>
    <recommendedName>
        <fullName>C-type lectin</fullName>
        <shortName>CTL</shortName>
    </recommendedName>
</protein>
<comment type="function">
    <text evidence="1">Mannose-binding lectin which recognizes specific carbohydrate structures and agglutinates a variety of animal cells by binding to cell-surface glycoproteins and glycolipids. May be a calcium-dependent lectin (By similarity).</text>
</comment>
<comment type="subunit">
    <text evidence="5">Homodimer; non-covalently linked.</text>
</comment>
<comment type="subcellular location">
    <subcellularLocation>
        <location evidence="1">Secreted</location>
    </subcellularLocation>
</comment>
<comment type="tissue specificity">
    <text>Expressed by the venom gland.</text>
</comment>
<comment type="similarity">
    <text evidence="5">Belongs to the true venom lectin family.</text>
</comment>
<dbReference type="EMBL" id="GQ139599">
    <property type="protein sequence ID" value="ACS74993.1"/>
    <property type="molecule type" value="mRNA"/>
</dbReference>
<dbReference type="SMR" id="C6JUN9"/>
<dbReference type="GO" id="GO:0005576">
    <property type="term" value="C:extracellular region"/>
    <property type="evidence" value="ECO:0007669"/>
    <property type="project" value="UniProtKB-SubCell"/>
</dbReference>
<dbReference type="GO" id="GO:0030246">
    <property type="term" value="F:carbohydrate binding"/>
    <property type="evidence" value="ECO:0007669"/>
    <property type="project" value="UniProtKB-KW"/>
</dbReference>
<dbReference type="GO" id="GO:0046872">
    <property type="term" value="F:metal ion binding"/>
    <property type="evidence" value="ECO:0007669"/>
    <property type="project" value="UniProtKB-KW"/>
</dbReference>
<dbReference type="CDD" id="cd03594">
    <property type="entry name" value="CLECT_REG-1_like"/>
    <property type="match status" value="1"/>
</dbReference>
<dbReference type="FunFam" id="3.10.100.10:FF:000015">
    <property type="entry name" value="C-type lectin Cal"/>
    <property type="match status" value="1"/>
</dbReference>
<dbReference type="Gene3D" id="3.10.100.10">
    <property type="entry name" value="Mannose-Binding Protein A, subunit A"/>
    <property type="match status" value="1"/>
</dbReference>
<dbReference type="InterPro" id="IPR001304">
    <property type="entry name" value="C-type_lectin-like"/>
</dbReference>
<dbReference type="InterPro" id="IPR016186">
    <property type="entry name" value="C-type_lectin-like/link_sf"/>
</dbReference>
<dbReference type="InterPro" id="IPR050111">
    <property type="entry name" value="C-type_lectin/snaclec_domain"/>
</dbReference>
<dbReference type="InterPro" id="IPR018378">
    <property type="entry name" value="C-type_lectin_CS"/>
</dbReference>
<dbReference type="InterPro" id="IPR016187">
    <property type="entry name" value="CTDL_fold"/>
</dbReference>
<dbReference type="PANTHER" id="PTHR22803">
    <property type="entry name" value="MANNOSE, PHOSPHOLIPASE, LECTIN RECEPTOR RELATED"/>
    <property type="match status" value="1"/>
</dbReference>
<dbReference type="Pfam" id="PF00059">
    <property type="entry name" value="Lectin_C"/>
    <property type="match status" value="1"/>
</dbReference>
<dbReference type="PRINTS" id="PR01504">
    <property type="entry name" value="PNCREATITSAP"/>
</dbReference>
<dbReference type="SMART" id="SM00034">
    <property type="entry name" value="CLECT"/>
    <property type="match status" value="1"/>
</dbReference>
<dbReference type="SUPFAM" id="SSF56436">
    <property type="entry name" value="C-type lectin-like"/>
    <property type="match status" value="1"/>
</dbReference>
<dbReference type="PROSITE" id="PS00615">
    <property type="entry name" value="C_TYPE_LECTIN_1"/>
    <property type="match status" value="1"/>
</dbReference>
<dbReference type="PROSITE" id="PS50041">
    <property type="entry name" value="C_TYPE_LECTIN_2"/>
    <property type="match status" value="1"/>
</dbReference>
<feature type="signal peptide" evidence="4">
    <location>
        <begin position="1"/>
        <end position="23"/>
    </location>
</feature>
<feature type="chain" id="PRO_0000422885" description="C-type lectin">
    <location>
        <begin position="24"/>
        <end position="158"/>
    </location>
</feature>
<feature type="domain" description="C-type lectin" evidence="3">
    <location>
        <begin position="33"/>
        <end position="155"/>
    </location>
</feature>
<feature type="short sequence motif" description="Mannose-binding" evidence="1">
    <location>
        <begin position="119"/>
        <end position="121"/>
    </location>
</feature>
<feature type="binding site" evidence="1">
    <location>
        <position position="127"/>
    </location>
    <ligand>
        <name>Ca(2+)</name>
        <dbReference type="ChEBI" id="CHEBI:29108"/>
    </ligand>
</feature>
<feature type="binding site" evidence="1">
    <location>
        <position position="142"/>
    </location>
    <ligand>
        <name>Ca(2+)</name>
        <dbReference type="ChEBI" id="CHEBI:29108"/>
    </ligand>
</feature>
<feature type="binding site" evidence="1">
    <location>
        <position position="143"/>
    </location>
    <ligand>
        <name>Ca(2+)</name>
        <dbReference type="ChEBI" id="CHEBI:29108"/>
    </ligand>
</feature>
<feature type="glycosylation site" description="N-linked (GlcNAc...) asparagine" evidence="2">
    <location>
        <position position="111"/>
    </location>
</feature>
<feature type="glycosylation site" description="N-linked (GlcNAc...) asparagine" evidence="2">
    <location>
        <position position="121"/>
    </location>
</feature>
<feature type="disulfide bond" evidence="3">
    <location>
        <begin position="26"/>
        <end position="37"/>
    </location>
</feature>
<feature type="disulfide bond" evidence="3">
    <location>
        <begin position="54"/>
        <end position="154"/>
    </location>
</feature>
<feature type="disulfide bond" evidence="3">
    <location>
        <begin position="61"/>
        <end position="156"/>
    </location>
</feature>
<feature type="disulfide bond" evidence="3">
    <location>
        <begin position="129"/>
        <end position="146"/>
    </location>
</feature>
<proteinExistence type="evidence at protein level"/>